<name>SYFB_MYCGA</name>
<sequence length="804" mass="93081">MLLSKKVIANFIPTITKIEDKKIVEALNAIGAEVESIKTFSMIDYLIIGKIFTIKKHPHAEKLNICSIQISDNKFINIISDSPNLFDQTKVLNKYVIVAMEGAELPNGITVINRDIRGMNSSGLLCSYADLNPQSSEYLSEYDSKNIIILDKANLGDTEVYKYLNIDDTIFDISIPSSRPDWHGIRFLAKELAAYLNLKYVELIGRAKQTDFHQINFKVLDETDNKAKYFGGIHLRNYQLQQSSWNTKGILINNHIKPINDLVDLSNLIPLFVANPIHIHDADKIVGDVRLVQATKKEQFLALDNKWYTVQENDLLVVDDEKIIALAGIIGSMATAVDENSINYFIEVGNFDRHQIIKSAAFHKINTYSANLFSKEISLYQTKKTFEYLYQYLLTKVYNQQLSELSKTFSVDEYHQQVKVNYDKIRSLLGSMNYLPDAMIQKSLTDLGFLVEDDLVYVPSYRNDIYNWQDLVEELLKILNINLFQPIPIKADYLLEVNNETNELLDRLSKKLRSLKFNHIRTYNLTSKKRAELLNLFKYQDPVVVSKPISETRQYYRQNILTNLLEVYQLNRSYKNKLYPIFEIQSLLTKNGANHHIGLVMANNLFNHSYDPSSGIKLDLITIKGISDIIVQNFGFNCNYQTINDDTYLVKNDSLKLVVYDETIGYIGKIKKSILKEFDLADQDIYCLDINLERLITSINRYVRTYEAYDHYQEVTRDITFQLKNEVDFNSFINVINSFNKLSKWEIISIFDATNQIDTNKTYQPTKYTVRCYLKQGDKTYTTKEINQIFDELIDLMKTKQILI</sequence>
<evidence type="ECO:0000255" key="1">
    <source>
        <dbReference type="HAMAP-Rule" id="MF_00283"/>
    </source>
</evidence>
<accession>Q7NBB7</accession>
<reference key="1">
    <citation type="journal article" date="2003" name="Microbiology">
        <title>The complete genome sequence of the avian pathogen Mycoplasma gallisepticum strain R(low).</title>
        <authorList>
            <person name="Papazisi L."/>
            <person name="Gorton T.S."/>
            <person name="Kutish G."/>
            <person name="Markham P.F."/>
            <person name="Browning G.F."/>
            <person name="Nguyen D.K."/>
            <person name="Swartzell S."/>
            <person name="Madan A."/>
            <person name="Mahairas G."/>
            <person name="Geary S.J."/>
        </authorList>
    </citation>
    <scope>NUCLEOTIDE SEQUENCE [LARGE SCALE GENOMIC DNA]</scope>
    <source>
        <strain>R(low / passage 15 / clone 2)</strain>
    </source>
</reference>
<protein>
    <recommendedName>
        <fullName evidence="1">Phenylalanine--tRNA ligase beta subunit</fullName>
        <ecNumber evidence="1">6.1.1.20</ecNumber>
    </recommendedName>
    <alternativeName>
        <fullName evidence="1">Phenylalanyl-tRNA synthetase beta subunit</fullName>
        <shortName evidence="1">PheRS</shortName>
    </alternativeName>
</protein>
<dbReference type="EC" id="6.1.1.20" evidence="1"/>
<dbReference type="EMBL" id="AE015450">
    <property type="protein sequence ID" value="AAP56712.2"/>
    <property type="molecule type" value="Genomic_DNA"/>
</dbReference>
<dbReference type="RefSeq" id="WP_011113608.1">
    <property type="nucleotide sequence ID" value="NC_004829.2"/>
</dbReference>
<dbReference type="SMR" id="Q7NBB7"/>
<dbReference type="GeneID" id="93510194"/>
<dbReference type="KEGG" id="mga:MGA_1281"/>
<dbReference type="PATRIC" id="fig|233150.7.peg.407"/>
<dbReference type="HOGENOM" id="CLU_016891_2_0_14"/>
<dbReference type="OrthoDB" id="9805455at2"/>
<dbReference type="Proteomes" id="UP000001418">
    <property type="component" value="Chromosome"/>
</dbReference>
<dbReference type="GO" id="GO:0009328">
    <property type="term" value="C:phenylalanine-tRNA ligase complex"/>
    <property type="evidence" value="ECO:0007669"/>
    <property type="project" value="TreeGrafter"/>
</dbReference>
<dbReference type="GO" id="GO:0005524">
    <property type="term" value="F:ATP binding"/>
    <property type="evidence" value="ECO:0007669"/>
    <property type="project" value="UniProtKB-UniRule"/>
</dbReference>
<dbReference type="GO" id="GO:0000287">
    <property type="term" value="F:magnesium ion binding"/>
    <property type="evidence" value="ECO:0007669"/>
    <property type="project" value="UniProtKB-UniRule"/>
</dbReference>
<dbReference type="GO" id="GO:0004826">
    <property type="term" value="F:phenylalanine-tRNA ligase activity"/>
    <property type="evidence" value="ECO:0007669"/>
    <property type="project" value="UniProtKB-UniRule"/>
</dbReference>
<dbReference type="GO" id="GO:0000049">
    <property type="term" value="F:tRNA binding"/>
    <property type="evidence" value="ECO:0007669"/>
    <property type="project" value="UniProtKB-KW"/>
</dbReference>
<dbReference type="GO" id="GO:0006432">
    <property type="term" value="P:phenylalanyl-tRNA aminoacylation"/>
    <property type="evidence" value="ECO:0007669"/>
    <property type="project" value="UniProtKB-UniRule"/>
</dbReference>
<dbReference type="CDD" id="cd00769">
    <property type="entry name" value="PheRS_beta_core"/>
    <property type="match status" value="1"/>
</dbReference>
<dbReference type="CDD" id="cd02796">
    <property type="entry name" value="tRNA_bind_bactPheRS"/>
    <property type="match status" value="1"/>
</dbReference>
<dbReference type="Gene3D" id="3.30.56.10">
    <property type="match status" value="2"/>
</dbReference>
<dbReference type="Gene3D" id="3.30.930.10">
    <property type="entry name" value="Bira Bifunctional Protein, Domain 2"/>
    <property type="match status" value="1"/>
</dbReference>
<dbReference type="Gene3D" id="3.30.70.380">
    <property type="entry name" value="Ferrodoxin-fold anticodon-binding domain"/>
    <property type="match status" value="1"/>
</dbReference>
<dbReference type="Gene3D" id="2.40.50.140">
    <property type="entry name" value="Nucleic acid-binding proteins"/>
    <property type="match status" value="1"/>
</dbReference>
<dbReference type="Gene3D" id="3.50.40.10">
    <property type="entry name" value="Phenylalanyl-trna Synthetase, Chain B, domain 3"/>
    <property type="match status" value="1"/>
</dbReference>
<dbReference type="HAMAP" id="MF_00283">
    <property type="entry name" value="Phe_tRNA_synth_beta1"/>
    <property type="match status" value="1"/>
</dbReference>
<dbReference type="InterPro" id="IPR045864">
    <property type="entry name" value="aa-tRNA-synth_II/BPL/LPL"/>
</dbReference>
<dbReference type="InterPro" id="IPR005146">
    <property type="entry name" value="B3/B4_tRNA-bd"/>
</dbReference>
<dbReference type="InterPro" id="IPR009061">
    <property type="entry name" value="DNA-bd_dom_put_sf"/>
</dbReference>
<dbReference type="InterPro" id="IPR005121">
    <property type="entry name" value="Fdx_antiC-bd"/>
</dbReference>
<dbReference type="InterPro" id="IPR036690">
    <property type="entry name" value="Fdx_antiC-bd_sf"/>
</dbReference>
<dbReference type="InterPro" id="IPR012340">
    <property type="entry name" value="NA-bd_OB-fold"/>
</dbReference>
<dbReference type="InterPro" id="IPR045060">
    <property type="entry name" value="Phe-tRNA-ligase_IIc_bsu"/>
</dbReference>
<dbReference type="InterPro" id="IPR004532">
    <property type="entry name" value="Phe-tRNA-ligase_IIc_bsu_bact"/>
</dbReference>
<dbReference type="InterPro" id="IPR020825">
    <property type="entry name" value="Phe-tRNA_synthase-like_B3/B4"/>
</dbReference>
<dbReference type="InterPro" id="IPR041616">
    <property type="entry name" value="PheRS_beta_core"/>
</dbReference>
<dbReference type="InterPro" id="IPR002547">
    <property type="entry name" value="tRNA-bd_dom"/>
</dbReference>
<dbReference type="InterPro" id="IPR033714">
    <property type="entry name" value="tRNA_bind_bactPheRS"/>
</dbReference>
<dbReference type="InterPro" id="IPR005147">
    <property type="entry name" value="tRNA_synthase_B5-dom"/>
</dbReference>
<dbReference type="NCBIfam" id="TIGR00472">
    <property type="entry name" value="pheT_bact"/>
    <property type="match status" value="1"/>
</dbReference>
<dbReference type="PANTHER" id="PTHR10947:SF0">
    <property type="entry name" value="PHENYLALANINE--TRNA LIGASE BETA SUBUNIT"/>
    <property type="match status" value="1"/>
</dbReference>
<dbReference type="PANTHER" id="PTHR10947">
    <property type="entry name" value="PHENYLALANYL-TRNA SYNTHETASE BETA CHAIN AND LEUCINE-RICH REPEAT-CONTAINING PROTEIN 47"/>
    <property type="match status" value="1"/>
</dbReference>
<dbReference type="Pfam" id="PF03483">
    <property type="entry name" value="B3_4"/>
    <property type="match status" value="1"/>
</dbReference>
<dbReference type="Pfam" id="PF03484">
    <property type="entry name" value="B5"/>
    <property type="match status" value="1"/>
</dbReference>
<dbReference type="Pfam" id="PF03147">
    <property type="entry name" value="FDX-ACB"/>
    <property type="match status" value="1"/>
</dbReference>
<dbReference type="Pfam" id="PF01588">
    <property type="entry name" value="tRNA_bind"/>
    <property type="match status" value="1"/>
</dbReference>
<dbReference type="Pfam" id="PF17759">
    <property type="entry name" value="tRNA_synthFbeta"/>
    <property type="match status" value="1"/>
</dbReference>
<dbReference type="SMART" id="SM00873">
    <property type="entry name" value="B3_4"/>
    <property type="match status" value="1"/>
</dbReference>
<dbReference type="SMART" id="SM00874">
    <property type="entry name" value="B5"/>
    <property type="match status" value="1"/>
</dbReference>
<dbReference type="SUPFAM" id="SSF54991">
    <property type="entry name" value="Anticodon-binding domain of PheRS"/>
    <property type="match status" value="1"/>
</dbReference>
<dbReference type="SUPFAM" id="SSF55681">
    <property type="entry name" value="Class II aaRS and biotin synthetases"/>
    <property type="match status" value="1"/>
</dbReference>
<dbReference type="SUPFAM" id="SSF50249">
    <property type="entry name" value="Nucleic acid-binding proteins"/>
    <property type="match status" value="1"/>
</dbReference>
<dbReference type="SUPFAM" id="SSF56037">
    <property type="entry name" value="PheT/TilS domain"/>
    <property type="match status" value="1"/>
</dbReference>
<dbReference type="SUPFAM" id="SSF46955">
    <property type="entry name" value="Putative DNA-binding domain"/>
    <property type="match status" value="1"/>
</dbReference>
<dbReference type="PROSITE" id="PS51483">
    <property type="entry name" value="B5"/>
    <property type="match status" value="1"/>
</dbReference>
<dbReference type="PROSITE" id="PS51447">
    <property type="entry name" value="FDX_ACB"/>
    <property type="match status" value="1"/>
</dbReference>
<dbReference type="PROSITE" id="PS50886">
    <property type="entry name" value="TRBD"/>
    <property type="match status" value="1"/>
</dbReference>
<organism>
    <name type="scientific">Mycoplasmoides gallisepticum (strain R(low / passage 15 / clone 2))</name>
    <name type="common">Mycoplasma gallisepticum</name>
    <dbReference type="NCBI Taxonomy" id="710127"/>
    <lineage>
        <taxon>Bacteria</taxon>
        <taxon>Bacillati</taxon>
        <taxon>Mycoplasmatota</taxon>
        <taxon>Mycoplasmoidales</taxon>
        <taxon>Mycoplasmoidaceae</taxon>
        <taxon>Mycoplasmoides</taxon>
    </lineage>
</organism>
<comment type="catalytic activity">
    <reaction evidence="1">
        <text>tRNA(Phe) + L-phenylalanine + ATP = L-phenylalanyl-tRNA(Phe) + AMP + diphosphate + H(+)</text>
        <dbReference type="Rhea" id="RHEA:19413"/>
        <dbReference type="Rhea" id="RHEA-COMP:9668"/>
        <dbReference type="Rhea" id="RHEA-COMP:9699"/>
        <dbReference type="ChEBI" id="CHEBI:15378"/>
        <dbReference type="ChEBI" id="CHEBI:30616"/>
        <dbReference type="ChEBI" id="CHEBI:33019"/>
        <dbReference type="ChEBI" id="CHEBI:58095"/>
        <dbReference type="ChEBI" id="CHEBI:78442"/>
        <dbReference type="ChEBI" id="CHEBI:78531"/>
        <dbReference type="ChEBI" id="CHEBI:456215"/>
        <dbReference type="EC" id="6.1.1.20"/>
    </reaction>
</comment>
<comment type="cofactor">
    <cofactor evidence="1">
        <name>Mg(2+)</name>
        <dbReference type="ChEBI" id="CHEBI:18420"/>
    </cofactor>
    <text evidence="1">Binds 2 magnesium ions per tetramer.</text>
</comment>
<comment type="subunit">
    <text evidence="1">Tetramer of two alpha and two beta subunits.</text>
</comment>
<comment type="subcellular location">
    <subcellularLocation>
        <location evidence="1">Cytoplasm</location>
    </subcellularLocation>
</comment>
<comment type="similarity">
    <text evidence="1">Belongs to the phenylalanyl-tRNA synthetase beta subunit family. Type 1 subfamily.</text>
</comment>
<keyword id="KW-0030">Aminoacyl-tRNA synthetase</keyword>
<keyword id="KW-0067">ATP-binding</keyword>
<keyword id="KW-0963">Cytoplasm</keyword>
<keyword id="KW-0436">Ligase</keyword>
<keyword id="KW-0460">Magnesium</keyword>
<keyword id="KW-0479">Metal-binding</keyword>
<keyword id="KW-0547">Nucleotide-binding</keyword>
<keyword id="KW-0648">Protein biosynthesis</keyword>
<keyword id="KW-1185">Reference proteome</keyword>
<keyword id="KW-0694">RNA-binding</keyword>
<keyword id="KW-0820">tRNA-binding</keyword>
<gene>
    <name evidence="1" type="primary">pheT</name>
    <name type="ordered locus">MYCGA3620</name>
    <name type="ORF">MGA_1281</name>
</gene>
<proteinExistence type="inferred from homology"/>
<feature type="chain" id="PRO_0000232806" description="Phenylalanine--tRNA ligase beta subunit">
    <location>
        <begin position="1"/>
        <end position="804"/>
    </location>
</feature>
<feature type="domain" description="tRNA-binding" evidence="1">
    <location>
        <begin position="40"/>
        <end position="161"/>
    </location>
</feature>
<feature type="domain" description="B5" evidence="1">
    <location>
        <begin position="413"/>
        <end position="486"/>
    </location>
</feature>
<feature type="domain" description="FDX-ACB" evidence="1">
    <location>
        <begin position="710"/>
        <end position="804"/>
    </location>
</feature>
<feature type="binding site" evidence="1">
    <location>
        <position position="464"/>
    </location>
    <ligand>
        <name>Mg(2+)</name>
        <dbReference type="ChEBI" id="CHEBI:18420"/>
        <note>shared with alpha subunit</note>
    </ligand>
</feature>
<feature type="binding site" evidence="1">
    <location>
        <position position="470"/>
    </location>
    <ligand>
        <name>Mg(2+)</name>
        <dbReference type="ChEBI" id="CHEBI:18420"/>
        <note>shared with alpha subunit</note>
    </ligand>
</feature>
<feature type="binding site" evidence="1">
    <location>
        <position position="473"/>
    </location>
    <ligand>
        <name>Mg(2+)</name>
        <dbReference type="ChEBI" id="CHEBI:18420"/>
        <note>shared with alpha subunit</note>
    </ligand>
</feature>
<feature type="binding site" evidence="1">
    <location>
        <position position="474"/>
    </location>
    <ligand>
        <name>Mg(2+)</name>
        <dbReference type="ChEBI" id="CHEBI:18420"/>
        <note>shared with alpha subunit</note>
    </ligand>
</feature>